<protein>
    <recommendedName>
        <fullName evidence="1">2-dehydro-3-deoxyphosphooctonate aldolase</fullName>
        <ecNumber evidence="1">2.5.1.55</ecNumber>
    </recommendedName>
    <alternativeName>
        <fullName evidence="1">3-deoxy-D-manno-octulosonic acid 8-phosphate synthase</fullName>
    </alternativeName>
    <alternativeName>
        <fullName evidence="1">KDO-8-phosphate synthase</fullName>
        <shortName evidence="1">KDO 8-P synthase</shortName>
        <shortName evidence="1">KDOPS</shortName>
    </alternativeName>
    <alternativeName>
        <fullName evidence="1">Phospho-2-dehydro-3-deoxyoctonate aldolase</fullName>
    </alternativeName>
</protein>
<organism>
    <name type="scientific">Haemophilus influenzae (strain PittEE)</name>
    <dbReference type="NCBI Taxonomy" id="374930"/>
    <lineage>
        <taxon>Bacteria</taxon>
        <taxon>Pseudomonadati</taxon>
        <taxon>Pseudomonadota</taxon>
        <taxon>Gammaproteobacteria</taxon>
        <taxon>Pasteurellales</taxon>
        <taxon>Pasteurellaceae</taxon>
        <taxon>Haemophilus</taxon>
    </lineage>
</organism>
<dbReference type="EC" id="2.5.1.55" evidence="1"/>
<dbReference type="EMBL" id="CP000671">
    <property type="protein sequence ID" value="ABQ98449.1"/>
    <property type="molecule type" value="Genomic_DNA"/>
</dbReference>
<dbReference type="SMR" id="A5UCE8"/>
<dbReference type="KEGG" id="hip:CGSHiEE_05365"/>
<dbReference type="HOGENOM" id="CLU_036666_0_0_6"/>
<dbReference type="UniPathway" id="UPA00030"/>
<dbReference type="UniPathway" id="UPA00357">
    <property type="reaction ID" value="UER00474"/>
</dbReference>
<dbReference type="GO" id="GO:0005737">
    <property type="term" value="C:cytoplasm"/>
    <property type="evidence" value="ECO:0007669"/>
    <property type="project" value="UniProtKB-SubCell"/>
</dbReference>
<dbReference type="GO" id="GO:0008676">
    <property type="term" value="F:3-deoxy-8-phosphooctulonate synthase activity"/>
    <property type="evidence" value="ECO:0007669"/>
    <property type="project" value="UniProtKB-UniRule"/>
</dbReference>
<dbReference type="GO" id="GO:0019294">
    <property type="term" value="P:keto-3-deoxy-D-manno-octulosonic acid biosynthetic process"/>
    <property type="evidence" value="ECO:0007669"/>
    <property type="project" value="UniProtKB-UniRule"/>
</dbReference>
<dbReference type="FunFam" id="3.20.20.70:FF:000058">
    <property type="entry name" value="2-dehydro-3-deoxyphosphooctonate aldolase"/>
    <property type="match status" value="1"/>
</dbReference>
<dbReference type="Gene3D" id="3.20.20.70">
    <property type="entry name" value="Aldolase class I"/>
    <property type="match status" value="1"/>
</dbReference>
<dbReference type="HAMAP" id="MF_00056">
    <property type="entry name" value="KDO8P_synth"/>
    <property type="match status" value="1"/>
</dbReference>
<dbReference type="InterPro" id="IPR013785">
    <property type="entry name" value="Aldolase_TIM"/>
</dbReference>
<dbReference type="InterPro" id="IPR006218">
    <property type="entry name" value="DAHP1/KDSA"/>
</dbReference>
<dbReference type="InterPro" id="IPR006269">
    <property type="entry name" value="KDO8P_synthase"/>
</dbReference>
<dbReference type="NCBIfam" id="TIGR01362">
    <property type="entry name" value="KDO8P_synth"/>
    <property type="match status" value="1"/>
</dbReference>
<dbReference type="NCBIfam" id="NF003543">
    <property type="entry name" value="PRK05198.1"/>
    <property type="match status" value="1"/>
</dbReference>
<dbReference type="NCBIfam" id="NF009109">
    <property type="entry name" value="PRK12457.1"/>
    <property type="match status" value="1"/>
</dbReference>
<dbReference type="PANTHER" id="PTHR21057">
    <property type="entry name" value="PHOSPHO-2-DEHYDRO-3-DEOXYHEPTONATE ALDOLASE"/>
    <property type="match status" value="1"/>
</dbReference>
<dbReference type="Pfam" id="PF00793">
    <property type="entry name" value="DAHP_synth_1"/>
    <property type="match status" value="1"/>
</dbReference>
<dbReference type="SUPFAM" id="SSF51569">
    <property type="entry name" value="Aldolase"/>
    <property type="match status" value="1"/>
</dbReference>
<comment type="catalytic activity">
    <reaction evidence="1">
        <text>D-arabinose 5-phosphate + phosphoenolpyruvate + H2O = 3-deoxy-alpha-D-manno-2-octulosonate-8-phosphate + phosphate</text>
        <dbReference type="Rhea" id="RHEA:14053"/>
        <dbReference type="ChEBI" id="CHEBI:15377"/>
        <dbReference type="ChEBI" id="CHEBI:43474"/>
        <dbReference type="ChEBI" id="CHEBI:57693"/>
        <dbReference type="ChEBI" id="CHEBI:58702"/>
        <dbReference type="ChEBI" id="CHEBI:85985"/>
        <dbReference type="EC" id="2.5.1.55"/>
    </reaction>
</comment>
<comment type="pathway">
    <text evidence="1">Carbohydrate biosynthesis; 3-deoxy-D-manno-octulosonate biosynthesis; 3-deoxy-D-manno-octulosonate from D-ribulose 5-phosphate: step 2/3.</text>
</comment>
<comment type="pathway">
    <text evidence="1">Bacterial outer membrane biogenesis; lipopolysaccharide biosynthesis.</text>
</comment>
<comment type="subcellular location">
    <subcellularLocation>
        <location evidence="1">Cytoplasm</location>
    </subcellularLocation>
</comment>
<comment type="similarity">
    <text evidence="1">Belongs to the KdsA family.</text>
</comment>
<feature type="chain" id="PRO_1000003335" description="2-dehydro-3-deoxyphosphooctonate aldolase">
    <location>
        <begin position="1"/>
        <end position="284"/>
    </location>
</feature>
<gene>
    <name evidence="1" type="primary">kdsA</name>
    <name type="ordered locus">CGSHiEE_05365</name>
</gene>
<name>KDSA_HAEIE</name>
<proteinExistence type="inferred from homology"/>
<reference key="1">
    <citation type="journal article" date="2007" name="Genome Biol.">
        <title>Characterization and modeling of the Haemophilus influenzae core and supragenomes based on the complete genomic sequences of Rd and 12 clinical nontypeable strains.</title>
        <authorList>
            <person name="Hogg J.S."/>
            <person name="Hu F.Z."/>
            <person name="Janto B."/>
            <person name="Boissy R."/>
            <person name="Hayes J."/>
            <person name="Keefe R."/>
            <person name="Post J.C."/>
            <person name="Ehrlich G.D."/>
        </authorList>
    </citation>
    <scope>NUCLEOTIDE SEQUENCE [LARGE SCALE GENOMIC DNA]</scope>
    <source>
        <strain>PittEE</strain>
    </source>
</reference>
<evidence type="ECO:0000255" key="1">
    <source>
        <dbReference type="HAMAP-Rule" id="MF_00056"/>
    </source>
</evidence>
<accession>A5UCE8</accession>
<keyword id="KW-0963">Cytoplasm</keyword>
<keyword id="KW-0448">Lipopolysaccharide biosynthesis</keyword>
<keyword id="KW-0808">Transferase</keyword>
<sequence length="284" mass="30997">MQNKIVKIGNIDVANDKPFVLFGGMNVLESRDMAMQVCESYVKVTEKLGVPYVFKASFDKANRSSIHSYRGPGMEEGLKIFQELKDTFGVKIITDVHEIYQCQPVADVVDIIQLPAFLARQTDLVEAMAKTGAVINVKKPQFLSPSQMGNIVEKIEECGNDKIILCDRGTNFGYDNLIVDMLGFSVMKKASKGSPVIFDVTHSLQCRDPFGAASSGRRAQVTELARSGLAVGIAGLFLEAHPNPNQAKCDGPSALPLSALEGFVFQMKAIDDLVKSFPELDTSI</sequence>